<dbReference type="EC" id="1.1.1.184" evidence="3 4"/>
<dbReference type="EMBL" id="BA000022">
    <property type="protein sequence ID" value="BAA18402.1"/>
    <property type="molecule type" value="Genomic_DNA"/>
</dbReference>
<dbReference type="PIR" id="S76143">
    <property type="entry name" value="S76143"/>
</dbReference>
<dbReference type="SMR" id="P74308"/>
<dbReference type="FunCoup" id="P74308">
    <property type="interactions" value="278"/>
</dbReference>
<dbReference type="IntAct" id="P74308">
    <property type="interactions" value="10"/>
</dbReference>
<dbReference type="STRING" id="1148.gene:10499278"/>
<dbReference type="PaxDb" id="1148-1653489"/>
<dbReference type="EnsemblBacteria" id="BAA18402">
    <property type="protein sequence ID" value="BAA18402"/>
    <property type="gene ID" value="BAA18402"/>
</dbReference>
<dbReference type="KEGG" id="syn:slr0942"/>
<dbReference type="eggNOG" id="COG0656">
    <property type="taxonomic scope" value="Bacteria"/>
</dbReference>
<dbReference type="InParanoid" id="P74308"/>
<dbReference type="PhylomeDB" id="P74308"/>
<dbReference type="Proteomes" id="UP000001425">
    <property type="component" value="Chromosome"/>
</dbReference>
<dbReference type="GO" id="GO:0005829">
    <property type="term" value="C:cytosol"/>
    <property type="evidence" value="ECO:0000318"/>
    <property type="project" value="GO_Central"/>
</dbReference>
<dbReference type="GO" id="GO:0004033">
    <property type="term" value="F:aldo-keto reductase (NADPH) activity"/>
    <property type="evidence" value="ECO:0000314"/>
    <property type="project" value="UniProtKB"/>
</dbReference>
<dbReference type="GO" id="GO:0004032">
    <property type="term" value="F:aldose reductase (NADPH) activity"/>
    <property type="evidence" value="ECO:0000318"/>
    <property type="project" value="GO_Central"/>
</dbReference>
<dbReference type="GO" id="GO:0004090">
    <property type="term" value="F:carbonyl reductase (NADPH) activity"/>
    <property type="evidence" value="ECO:0007669"/>
    <property type="project" value="UniProtKB-EC"/>
</dbReference>
<dbReference type="GO" id="GO:0070402">
    <property type="term" value="F:NADPH binding"/>
    <property type="evidence" value="ECO:0000314"/>
    <property type="project" value="UniProtKB"/>
</dbReference>
<dbReference type="CDD" id="cd19123">
    <property type="entry name" value="AKR_AKR3G1"/>
    <property type="match status" value="1"/>
</dbReference>
<dbReference type="FunFam" id="3.20.20.100:FF:000006">
    <property type="entry name" value="Aldo-keto reductase family 1 member A1"/>
    <property type="match status" value="1"/>
</dbReference>
<dbReference type="Gene3D" id="3.20.20.100">
    <property type="entry name" value="NADP-dependent oxidoreductase domain"/>
    <property type="match status" value="1"/>
</dbReference>
<dbReference type="InterPro" id="IPR020471">
    <property type="entry name" value="AKR"/>
</dbReference>
<dbReference type="InterPro" id="IPR044496">
    <property type="entry name" value="AKR3G"/>
</dbReference>
<dbReference type="InterPro" id="IPR018170">
    <property type="entry name" value="Aldo/ket_reductase_CS"/>
</dbReference>
<dbReference type="InterPro" id="IPR023210">
    <property type="entry name" value="NADP_OxRdtase_dom"/>
</dbReference>
<dbReference type="InterPro" id="IPR036812">
    <property type="entry name" value="NADP_OxRdtase_dom_sf"/>
</dbReference>
<dbReference type="PANTHER" id="PTHR11732">
    <property type="entry name" value="ALDO/KETO REDUCTASE"/>
    <property type="match status" value="1"/>
</dbReference>
<dbReference type="Pfam" id="PF00248">
    <property type="entry name" value="Aldo_ket_red"/>
    <property type="match status" value="1"/>
</dbReference>
<dbReference type="PIRSF" id="PIRSF000097">
    <property type="entry name" value="AKR"/>
    <property type="match status" value="1"/>
</dbReference>
<dbReference type="PRINTS" id="PR00069">
    <property type="entry name" value="ALDKETRDTASE"/>
</dbReference>
<dbReference type="SUPFAM" id="SSF51430">
    <property type="entry name" value="NAD(P)-linked oxidoreductase"/>
    <property type="match status" value="1"/>
</dbReference>
<dbReference type="PROSITE" id="PS00798">
    <property type="entry name" value="ALDOKETO_REDUCTASE_1"/>
    <property type="match status" value="1"/>
</dbReference>
<organism>
    <name type="scientific">Synechocystis sp. (strain ATCC 27184 / PCC 6803 / Kazusa)</name>
    <dbReference type="NCBI Taxonomy" id="1111708"/>
    <lineage>
        <taxon>Bacteria</taxon>
        <taxon>Bacillati</taxon>
        <taxon>Cyanobacteriota</taxon>
        <taxon>Cyanophyceae</taxon>
        <taxon>Synechococcales</taxon>
        <taxon>Merismopediaceae</taxon>
        <taxon>Synechocystis</taxon>
    </lineage>
</organism>
<reference key="1">
    <citation type="journal article" date="1996" name="DNA Res.">
        <title>Sequence analysis of the genome of the unicellular cyanobacterium Synechocystis sp. strain PCC6803. II. Sequence determination of the entire genome and assignment of potential protein-coding regions.</title>
        <authorList>
            <person name="Kaneko T."/>
            <person name="Sato S."/>
            <person name="Kotani H."/>
            <person name="Tanaka A."/>
            <person name="Asamizu E."/>
            <person name="Nakamura Y."/>
            <person name="Miyajima N."/>
            <person name="Hirosawa M."/>
            <person name="Sugiura M."/>
            <person name="Sasamoto S."/>
            <person name="Kimura T."/>
            <person name="Hosouchi T."/>
            <person name="Matsuno A."/>
            <person name="Muraki A."/>
            <person name="Nakazaki N."/>
            <person name="Naruo K."/>
            <person name="Okumura S."/>
            <person name="Shimpo S."/>
            <person name="Takeuchi C."/>
            <person name="Wada T."/>
            <person name="Watanabe A."/>
            <person name="Yamada M."/>
            <person name="Yasuda M."/>
            <person name="Tabata S."/>
        </authorList>
    </citation>
    <scope>NUCLEOTIDE SEQUENCE [LARGE SCALE GENOMIC DNA]</scope>
    <source>
        <strain>ATCC 27184 / PCC 6803 / Kazusa</strain>
    </source>
</reference>
<reference key="2">
    <citation type="journal article" date="2013" name="Biosci. Biotechnol. Biochem.">
        <title>Scavenging systems for reactive carbonyls in the cyanobacterium Synechocystis sp. PCC 6803.</title>
        <authorList>
            <person name="Shimakawa G."/>
            <person name="Suzuki M."/>
            <person name="Yamamoto E."/>
            <person name="Nishi A."/>
            <person name="Saito R."/>
            <person name="Sakamoto K."/>
            <person name="Yamamoto H."/>
            <person name="Makino A."/>
            <person name="Miyake C."/>
        </authorList>
    </citation>
    <scope>FUNCTION</scope>
    <scope>CATALYTIC ACTIVITY</scope>
    <scope>SUBSTRATE SPECIFICITY</scope>
    <scope>BIOPHYSICOCHEMICAL PROPERTIES</scope>
    <source>
        <strain>ATCC 27184 / PCC 6803 / N-1</strain>
    </source>
</reference>
<reference key="3">
    <citation type="journal article" date="2015" name="FASEB J.">
        <title>Reduction of lipid peroxidation products and advanced glycation end-product precursors by cyanobacterial aldo-keto reductase AKR3G1-a founding member of the AKR3G subfamily.</title>
        <authorList>
            <person name="Hintzpeter J."/>
            <person name="Martin H.J."/>
            <person name="Maser E."/>
        </authorList>
    </citation>
    <scope>FUNCTION</scope>
    <scope>CATALYTIC ACTIVITY</scope>
    <scope>SUBSTRATE SPECIFICITY</scope>
    <scope>BIOPHYSICOCHEMICAL PROPERTIES</scope>
    <scope>ACTIVITY REGULATION</scope>
    <scope>SUBUNIT</scope>
    <scope>3D-STRUCTURE MODELING</scope>
    <source>
        <strain>ATCC 27184 / PCC 6803 / N-1</strain>
    </source>
</reference>
<protein>
    <recommendedName>
        <fullName evidence="5 6">Aldo/keto reductase slr0942</fullName>
        <shortName evidence="5 6">AKR</shortName>
        <ecNumber evidence="3 4">1.1.1.184</ecNumber>
    </recommendedName>
    <alternativeName>
        <fullName evidence="6">AKR3G1</fullName>
    </alternativeName>
</protein>
<keyword id="KW-0521">NADP</keyword>
<keyword id="KW-0560">Oxidoreductase</keyword>
<keyword id="KW-1185">Reference proteome</keyword>
<name>AKR_SYNY3</name>
<accession>P74308</accession>
<feature type="chain" id="PRO_0000431728" description="Aldo/keto reductase slr0942">
    <location>
        <begin position="1"/>
        <end position="327"/>
    </location>
</feature>
<feature type="active site" description="Proton donor" evidence="1">
    <location>
        <position position="57"/>
    </location>
</feature>
<feature type="binding site" evidence="2">
    <location>
        <begin position="18"/>
        <end position="27"/>
    </location>
    <ligand>
        <name>NADP(+)</name>
        <dbReference type="ChEBI" id="CHEBI:58349"/>
    </ligand>
</feature>
<feature type="binding site" evidence="1">
    <location>
        <position position="119"/>
    </location>
    <ligand>
        <name>substrate</name>
    </ligand>
</feature>
<feature type="binding site" evidence="1">
    <location>
        <begin position="216"/>
        <end position="280"/>
    </location>
    <ligand>
        <name>NADP(+)</name>
        <dbReference type="ChEBI" id="CHEBI:58349"/>
    </ligand>
</feature>
<feature type="site" description="Lowers pKa of active site Tyr" evidence="1">
    <location>
        <position position="86"/>
    </location>
</feature>
<proteinExistence type="evidence at protein level"/>
<evidence type="ECO:0000250" key="1">
    <source>
        <dbReference type="UniProtKB" id="P15121"/>
    </source>
</evidence>
<evidence type="ECO:0000255" key="2"/>
<evidence type="ECO:0000269" key="3">
    <source>
    </source>
</evidence>
<evidence type="ECO:0000269" key="4">
    <source>
    </source>
</evidence>
<evidence type="ECO:0000303" key="5">
    <source>
    </source>
</evidence>
<evidence type="ECO:0000303" key="6">
    <source>
    </source>
</evidence>
<evidence type="ECO:0000305" key="7"/>
<evidence type="ECO:0000312" key="8">
    <source>
        <dbReference type="EMBL" id="BAA18402.1"/>
    </source>
</evidence>
<gene>
    <name evidence="8" type="ordered locus">slr0942</name>
</gene>
<sequence length="327" mass="36014">MQSFNRINSMKYFPLSNGEQIPALGLGTWKSSPQVVGQAVEQALDLGYRHLDCAAIYGNEAEIGATLANAFTKGVVKREELWITSKLWSNAHHPDAVLPALEKTLQDLGLDYLDLYLIHWPVVIQPDVGFPESGDQLLPFTPASLEGTWQALEKAVDLGLCHHIGVSNFSLKKLEMVLSMARIPPAVNQVELHPYLQQSDLLTFANSQNILLTAYSPLGSGDRPAAFQQAAEPKLLTDPVINGIAAEQGCSAAQVLLAWAIQRGTVTIPKSVNPERLEQNLRAADITLTDSEMAKIALLDRHYRYVSGDFWTMPGSPYTLQNLWDEI</sequence>
<comment type="function">
    <text evidence="3 4">Aldo/keto reductase with broad substrate spectrum. Catalyzes the NADPH-dependent reduction of aldehyde- and ketone-groups of different classes of carbonyl compounds to the corresponding alcohols. Highest enzymatic efficiency is observed with 4-oxonon-2-enal (4-ONE) and 4-hydroxynon-2-enal (4-HNE), that are lipid peroxidation products, and 9,10-phenanthrenequinone (9,10-PQ), a photoproduct of phenanthrene that is one of the most prevalent polycyclic aromatic hydrocarbons in the environment. Is also active on sugar-derived reactive carbonyls such as methylglyoxal (MG), glyoxal and 3-deoxyglucosone (3-DG), and on other lipid-derived carbonyls such as acrolein. May be involved in the detoxification of the toxic lipid peroxidation products 4-ONE and 4-HNE besides many other exo- and endogenic reactive carbonyl compounds (RCs) that may lead to photoinhibition or other cell damages.</text>
</comment>
<comment type="catalytic activity">
    <reaction evidence="3 4">
        <text>a secondary alcohol + NADP(+) = a ketone + NADPH + H(+)</text>
        <dbReference type="Rhea" id="RHEA:19257"/>
        <dbReference type="ChEBI" id="CHEBI:15378"/>
        <dbReference type="ChEBI" id="CHEBI:17087"/>
        <dbReference type="ChEBI" id="CHEBI:35681"/>
        <dbReference type="ChEBI" id="CHEBI:57783"/>
        <dbReference type="ChEBI" id="CHEBI:58349"/>
        <dbReference type="EC" id="1.1.1.184"/>
    </reaction>
</comment>
<comment type="activity regulation">
    <text evidence="4">Curcumin non-competitively inhibits the enzyme with respect to furfural. To a lesser extent, enzyme activity is also inhibited by indomethacin, coumarate, coumarin, and alrestatin.</text>
</comment>
<comment type="biophysicochemical properties">
    <kinetics>
        <KM evidence="3">96 uM for methylglyoxal</KM>
        <KM evidence="3">10.8 mM for glyoxal</KM>
        <KM evidence="3">520 uM for 3-deoxyglucosone</KM>
        <KM evidence="3">1.7 mM for acrolein</KM>
        <KM evidence="4">94 uM for hexanal</KM>
        <KM evidence="4">94 uM for 4-pyridinecarboxaldehyde</KM>
        <KM evidence="4">46 uM for 4-nitrobenzaldehyde</KM>
        <KM evidence="4">5 uM for 9,10-phenanthrenequinone</KM>
        <KM evidence="4">4.7 uM for 4-oxonon-2-enal</KM>
        <KM evidence="4">59.5 uM for 4-hydroxynon-2-enal</KM>
        <KM evidence="4">890 uM for furfural</KM>
        <KM evidence="4">8.5 uM for NADPH</KM>
        <text evidence="3 4">kcat is 351 min(-1) with methylglyoxal as substrate. kcat is 1049 min(-1) with glyoxal as substrate. kcat is 226 min(-1) with 3-deoxyglucosone as substrate. kcat is 1078 min(-1) with acrolein as substrate. kcat is 1.75 sec(-1) with hexanal as substrate. kcat is 1.17 sec(-1) with 4-pyridinecarboxaldehyde as substrate. kcat is 0.3 sec(-1) with 4-nitrobenzaldehyde as substrate. kcat is 2.23 sec(-1) with 9,10-phenanthrenequinone as substrate. kcat is 4.06 sec(-1) with 2,3-pentanedione as substrate. kcat is 2.63 sec(-1) with 4-oxonon-2-enal as substrate. kcat is 1.57 sec(-1) with 4-hydroxynon-2-enal as substrate. kcat is 8.52 sec(-1) with furfural as substrate.</text>
    </kinetics>
    <phDependence>
        <text evidence="3">Optimum pH is 5 for the reduction of methylglyoxal.</text>
    </phDependence>
    <temperatureDependence>
        <text evidence="3">Optimum temperature is 60 degrees Celsius for the reduction of methylglyoxal.</text>
    </temperatureDependence>
</comment>
<comment type="subunit">
    <text evidence="4">Monomer.</text>
</comment>
<comment type="similarity">
    <text evidence="7">Belongs to the aldo/keto reductase family.</text>
</comment>